<name>PSAJ_AGRST</name>
<comment type="function">
    <text evidence="1">May help in the organization of the PsaE and PsaF subunits.</text>
</comment>
<comment type="subcellular location">
    <subcellularLocation>
        <location evidence="1">Plastid</location>
        <location evidence="1">Chloroplast thylakoid membrane</location>
        <topology evidence="1">Single-pass membrane protein</topology>
    </subcellularLocation>
</comment>
<comment type="similarity">
    <text evidence="1">Belongs to the PsaJ family.</text>
</comment>
<sequence length="42" mass="4745">MRDIKTYLSVAPVLSTLWFGALAGLLIEINRLFPDALSFPFF</sequence>
<accession>A1EA28</accession>
<geneLocation type="chloroplast"/>
<gene>
    <name evidence="1" type="primary">psaJ</name>
</gene>
<dbReference type="EMBL" id="EF115543">
    <property type="protein sequence ID" value="ABK79600.1"/>
    <property type="molecule type" value="Genomic_DNA"/>
</dbReference>
<dbReference type="RefSeq" id="YP_874756.1">
    <property type="nucleotide sequence ID" value="NC_008591.1"/>
</dbReference>
<dbReference type="SMR" id="A1EA28"/>
<dbReference type="GeneID" id="4525002"/>
<dbReference type="GO" id="GO:0009535">
    <property type="term" value="C:chloroplast thylakoid membrane"/>
    <property type="evidence" value="ECO:0007669"/>
    <property type="project" value="UniProtKB-SubCell"/>
</dbReference>
<dbReference type="GO" id="GO:0009522">
    <property type="term" value="C:photosystem I"/>
    <property type="evidence" value="ECO:0007669"/>
    <property type="project" value="UniProtKB-KW"/>
</dbReference>
<dbReference type="GO" id="GO:0015979">
    <property type="term" value="P:photosynthesis"/>
    <property type="evidence" value="ECO:0007669"/>
    <property type="project" value="UniProtKB-UniRule"/>
</dbReference>
<dbReference type="FunFam" id="1.20.5.510:FF:000001">
    <property type="entry name" value="Photosystem I reaction center subunit IX"/>
    <property type="match status" value="1"/>
</dbReference>
<dbReference type="Gene3D" id="1.20.5.510">
    <property type="entry name" value="Single helix bin"/>
    <property type="match status" value="1"/>
</dbReference>
<dbReference type="HAMAP" id="MF_00522">
    <property type="entry name" value="PSI_PsaJ"/>
    <property type="match status" value="1"/>
</dbReference>
<dbReference type="InterPro" id="IPR002615">
    <property type="entry name" value="PSI_PsaJ"/>
</dbReference>
<dbReference type="InterPro" id="IPR036062">
    <property type="entry name" value="PSI_PsaJ_sf"/>
</dbReference>
<dbReference type="PANTHER" id="PTHR36082">
    <property type="match status" value="1"/>
</dbReference>
<dbReference type="PANTHER" id="PTHR36082:SF2">
    <property type="entry name" value="PHOTOSYSTEM I REACTION CENTER SUBUNIT IX"/>
    <property type="match status" value="1"/>
</dbReference>
<dbReference type="Pfam" id="PF01701">
    <property type="entry name" value="PSI_PsaJ"/>
    <property type="match status" value="1"/>
</dbReference>
<dbReference type="SUPFAM" id="SSF81544">
    <property type="entry name" value="Subunit IX of photosystem I reaction centre, PsaJ"/>
    <property type="match status" value="1"/>
</dbReference>
<reference key="1">
    <citation type="journal article" date="2007" name="Theor. Appl. Genet.">
        <title>Complete chloroplast genome sequences of Hordeum vulgare, Sorghum bicolor and Agrostis stolonifera, and comparative analyses with other grass genomes.</title>
        <authorList>
            <person name="Saski C."/>
            <person name="Lee S.-B."/>
            <person name="Fjellheim S."/>
            <person name="Guda C."/>
            <person name="Jansen R.K."/>
            <person name="Luo H."/>
            <person name="Tomkins J."/>
            <person name="Rognli O.A."/>
            <person name="Daniell H."/>
            <person name="Clarke J.L."/>
        </authorList>
    </citation>
    <scope>NUCLEOTIDE SEQUENCE [LARGE SCALE GENOMIC DNA]</scope>
    <source>
        <strain>cv. Penn A-4</strain>
    </source>
</reference>
<evidence type="ECO:0000255" key="1">
    <source>
        <dbReference type="HAMAP-Rule" id="MF_00522"/>
    </source>
</evidence>
<keyword id="KW-0150">Chloroplast</keyword>
<keyword id="KW-0472">Membrane</keyword>
<keyword id="KW-0602">Photosynthesis</keyword>
<keyword id="KW-0603">Photosystem I</keyword>
<keyword id="KW-0934">Plastid</keyword>
<keyword id="KW-0793">Thylakoid</keyword>
<keyword id="KW-0812">Transmembrane</keyword>
<keyword id="KW-1133">Transmembrane helix</keyword>
<proteinExistence type="inferred from homology"/>
<protein>
    <recommendedName>
        <fullName evidence="1">Photosystem I reaction center subunit IX</fullName>
    </recommendedName>
    <alternativeName>
        <fullName evidence="1">PSI-J</fullName>
    </alternativeName>
</protein>
<feature type="chain" id="PRO_0000276048" description="Photosystem I reaction center subunit IX">
    <location>
        <begin position="1"/>
        <end position="42"/>
    </location>
</feature>
<feature type="transmembrane region" description="Helical" evidence="1">
    <location>
        <begin position="7"/>
        <end position="27"/>
    </location>
</feature>
<organism>
    <name type="scientific">Agrostis stolonifera</name>
    <name type="common">Creeping bentgrass</name>
    <dbReference type="NCBI Taxonomy" id="63632"/>
    <lineage>
        <taxon>Eukaryota</taxon>
        <taxon>Viridiplantae</taxon>
        <taxon>Streptophyta</taxon>
        <taxon>Embryophyta</taxon>
        <taxon>Tracheophyta</taxon>
        <taxon>Spermatophyta</taxon>
        <taxon>Magnoliopsida</taxon>
        <taxon>Liliopsida</taxon>
        <taxon>Poales</taxon>
        <taxon>Poaceae</taxon>
        <taxon>BOP clade</taxon>
        <taxon>Pooideae</taxon>
        <taxon>Poodae</taxon>
        <taxon>Poeae</taxon>
        <taxon>Poeae Chloroplast Group 1 (Aveneae type)</taxon>
        <taxon>Agrostidodinae</taxon>
        <taxon>Agrostidinae</taxon>
        <taxon>Agrostis</taxon>
    </lineage>
</organism>